<protein>
    <recommendedName>
        <fullName evidence="1">Nucleoid-associated protein Shewmr4_2217</fullName>
    </recommendedName>
</protein>
<name>NDPA_SHESM</name>
<accession>Q0HI27</accession>
<reference key="1">
    <citation type="submission" date="2006-08" db="EMBL/GenBank/DDBJ databases">
        <title>Complete sequence of Shewanella sp. MR-4.</title>
        <authorList>
            <consortium name="US DOE Joint Genome Institute"/>
            <person name="Copeland A."/>
            <person name="Lucas S."/>
            <person name="Lapidus A."/>
            <person name="Barry K."/>
            <person name="Detter J.C."/>
            <person name="Glavina del Rio T."/>
            <person name="Hammon N."/>
            <person name="Israni S."/>
            <person name="Dalin E."/>
            <person name="Tice H."/>
            <person name="Pitluck S."/>
            <person name="Kiss H."/>
            <person name="Brettin T."/>
            <person name="Bruce D."/>
            <person name="Han C."/>
            <person name="Tapia R."/>
            <person name="Gilna P."/>
            <person name="Schmutz J."/>
            <person name="Larimer F."/>
            <person name="Land M."/>
            <person name="Hauser L."/>
            <person name="Kyrpides N."/>
            <person name="Mikhailova N."/>
            <person name="Nealson K."/>
            <person name="Konstantinidis K."/>
            <person name="Klappenbach J."/>
            <person name="Tiedje J."/>
            <person name="Richardson P."/>
        </authorList>
    </citation>
    <scope>NUCLEOTIDE SEQUENCE [LARGE SCALE GENOMIC DNA]</scope>
    <source>
        <strain>MR-4</strain>
    </source>
</reference>
<keyword id="KW-0963">Cytoplasm</keyword>
<gene>
    <name type="ordered locus">Shewmr4_2217</name>
</gene>
<comment type="subcellular location">
    <subcellularLocation>
        <location evidence="1">Cytoplasm</location>
        <location evidence="1">Nucleoid</location>
    </subcellularLocation>
</comment>
<comment type="similarity">
    <text evidence="1">Belongs to the YejK family.</text>
</comment>
<sequence>MSINIEQAIIHEISQDSQGQLRCRLRPQPLLNSQAVEMMLEELHQTYTSKSGKGFGYFGIHGDDGEANPAFSNALQEYRAGDLGFVEFTGQASKLLQEELAKYDFSQGGFLLMSCYTSMASDFLFVALLSAKSSMTVLDDMELSQNNHLDLSNIQLAARIDLTEWQADKDSRKYISFIRGRAGRKVADFFLDFMGCVEGVNTKAQNKTLMNAVEDFVASSDLTKEERQQCRNKVFEYCSERFDEGADIEIKDLADELADQGMESFYDFARGGSYELDEEFPADKSTLRQLKKFSGTGGGVTISFDGGHLGQRVIYDPISDTLLIKGVPANLKDQLDRRLKGE</sequence>
<organism>
    <name type="scientific">Shewanella sp. (strain MR-4)</name>
    <dbReference type="NCBI Taxonomy" id="60480"/>
    <lineage>
        <taxon>Bacteria</taxon>
        <taxon>Pseudomonadati</taxon>
        <taxon>Pseudomonadota</taxon>
        <taxon>Gammaproteobacteria</taxon>
        <taxon>Alteromonadales</taxon>
        <taxon>Shewanellaceae</taxon>
        <taxon>Shewanella</taxon>
    </lineage>
</organism>
<dbReference type="EMBL" id="CP000446">
    <property type="protein sequence ID" value="ABI39290.1"/>
    <property type="molecule type" value="Genomic_DNA"/>
</dbReference>
<dbReference type="SMR" id="Q0HI27"/>
<dbReference type="KEGG" id="she:Shewmr4_2217"/>
<dbReference type="HOGENOM" id="CLU_063050_0_1_6"/>
<dbReference type="GO" id="GO:0043590">
    <property type="term" value="C:bacterial nucleoid"/>
    <property type="evidence" value="ECO:0007669"/>
    <property type="project" value="TreeGrafter"/>
</dbReference>
<dbReference type="GO" id="GO:0005737">
    <property type="term" value="C:cytoplasm"/>
    <property type="evidence" value="ECO:0007669"/>
    <property type="project" value="UniProtKB-UniRule"/>
</dbReference>
<dbReference type="GO" id="GO:0003690">
    <property type="term" value="F:double-stranded DNA binding"/>
    <property type="evidence" value="ECO:0007669"/>
    <property type="project" value="TreeGrafter"/>
</dbReference>
<dbReference type="GO" id="GO:0003727">
    <property type="term" value="F:single-stranded RNA binding"/>
    <property type="evidence" value="ECO:0007669"/>
    <property type="project" value="TreeGrafter"/>
</dbReference>
<dbReference type="HAMAP" id="MF_00730">
    <property type="entry name" value="NdpA"/>
    <property type="match status" value="1"/>
</dbReference>
<dbReference type="InterPro" id="IPR007358">
    <property type="entry name" value="Nucleoid_associated_NdpA"/>
</dbReference>
<dbReference type="NCBIfam" id="NF001557">
    <property type="entry name" value="PRK00378.1"/>
    <property type="match status" value="1"/>
</dbReference>
<dbReference type="PANTHER" id="PTHR38772">
    <property type="match status" value="1"/>
</dbReference>
<dbReference type="PANTHER" id="PTHR38772:SF1">
    <property type="entry name" value="NUCLEOID-ASSOCIATED PROTEIN YEJK"/>
    <property type="match status" value="1"/>
</dbReference>
<dbReference type="Pfam" id="PF04245">
    <property type="entry name" value="NA37"/>
    <property type="match status" value="1"/>
</dbReference>
<proteinExistence type="inferred from homology"/>
<evidence type="ECO:0000255" key="1">
    <source>
        <dbReference type="HAMAP-Rule" id="MF_00730"/>
    </source>
</evidence>
<feature type="chain" id="PRO_1000045948" description="Nucleoid-associated protein Shewmr4_2217">
    <location>
        <begin position="1"/>
        <end position="342"/>
    </location>
</feature>